<proteinExistence type="inferred from homology"/>
<comment type="function">
    <text evidence="1">Catalyzes the deamination of dCTP to dUTP.</text>
</comment>
<comment type="catalytic activity">
    <reaction evidence="1">
        <text>dCTP + H2O + H(+) = dUTP + NH4(+)</text>
        <dbReference type="Rhea" id="RHEA:22680"/>
        <dbReference type="ChEBI" id="CHEBI:15377"/>
        <dbReference type="ChEBI" id="CHEBI:15378"/>
        <dbReference type="ChEBI" id="CHEBI:28938"/>
        <dbReference type="ChEBI" id="CHEBI:61481"/>
        <dbReference type="ChEBI" id="CHEBI:61555"/>
        <dbReference type="EC" id="3.5.4.13"/>
    </reaction>
</comment>
<comment type="pathway">
    <text evidence="1">Pyrimidine metabolism; dUMP biosynthesis; dUMP from dCTP (dUTP route): step 1/2.</text>
</comment>
<comment type="subunit">
    <text evidence="1">Homotrimer.</text>
</comment>
<comment type="similarity">
    <text evidence="1">Belongs to the dCTP deaminase family.</text>
</comment>
<feature type="chain" id="PRO_1000009699" description="dCTP deaminase">
    <location>
        <begin position="1"/>
        <end position="186"/>
    </location>
</feature>
<feature type="active site" description="Proton donor/acceptor" evidence="1">
    <location>
        <position position="133"/>
    </location>
</feature>
<feature type="binding site" evidence="1">
    <location>
        <begin position="107"/>
        <end position="112"/>
    </location>
    <ligand>
        <name>dCTP</name>
        <dbReference type="ChEBI" id="CHEBI:61481"/>
    </ligand>
</feature>
<feature type="binding site" evidence="1">
    <location>
        <position position="152"/>
    </location>
    <ligand>
        <name>dCTP</name>
        <dbReference type="ChEBI" id="CHEBI:61481"/>
    </ligand>
</feature>
<feature type="binding site" evidence="1">
    <location>
        <position position="166"/>
    </location>
    <ligand>
        <name>dCTP</name>
        <dbReference type="ChEBI" id="CHEBI:61481"/>
    </ligand>
</feature>
<feature type="binding site" evidence="1">
    <location>
        <position position="176"/>
    </location>
    <ligand>
        <name>dCTP</name>
        <dbReference type="ChEBI" id="CHEBI:61481"/>
    </ligand>
</feature>
<accession>A7H0H0</accession>
<dbReference type="EC" id="3.5.4.13" evidence="1"/>
<dbReference type="EMBL" id="CP000767">
    <property type="protein sequence ID" value="EAU01415.1"/>
    <property type="molecule type" value="Genomic_DNA"/>
</dbReference>
<dbReference type="RefSeq" id="WP_002948812.1">
    <property type="nucleotide sequence ID" value="NC_009715.2"/>
</dbReference>
<dbReference type="SMR" id="A7H0H0"/>
<dbReference type="STRING" id="360105.CCV52592_0559"/>
<dbReference type="GeneID" id="60991234"/>
<dbReference type="KEGG" id="ccv:CCV52592_0559"/>
<dbReference type="HOGENOM" id="CLU_087476_4_0_7"/>
<dbReference type="OrthoDB" id="9780956at2"/>
<dbReference type="UniPathway" id="UPA00610">
    <property type="reaction ID" value="UER00665"/>
</dbReference>
<dbReference type="Proteomes" id="UP000006380">
    <property type="component" value="Chromosome"/>
</dbReference>
<dbReference type="GO" id="GO:0008829">
    <property type="term" value="F:dCTP deaminase activity"/>
    <property type="evidence" value="ECO:0007669"/>
    <property type="project" value="UniProtKB-UniRule"/>
</dbReference>
<dbReference type="GO" id="GO:0000166">
    <property type="term" value="F:nucleotide binding"/>
    <property type="evidence" value="ECO:0007669"/>
    <property type="project" value="UniProtKB-KW"/>
</dbReference>
<dbReference type="GO" id="GO:0006226">
    <property type="term" value="P:dUMP biosynthetic process"/>
    <property type="evidence" value="ECO:0007669"/>
    <property type="project" value="UniProtKB-UniPathway"/>
</dbReference>
<dbReference type="GO" id="GO:0006229">
    <property type="term" value="P:dUTP biosynthetic process"/>
    <property type="evidence" value="ECO:0007669"/>
    <property type="project" value="UniProtKB-UniRule"/>
</dbReference>
<dbReference type="GO" id="GO:0015949">
    <property type="term" value="P:nucleobase-containing small molecule interconversion"/>
    <property type="evidence" value="ECO:0007669"/>
    <property type="project" value="TreeGrafter"/>
</dbReference>
<dbReference type="CDD" id="cd07557">
    <property type="entry name" value="trimeric_dUTPase"/>
    <property type="match status" value="1"/>
</dbReference>
<dbReference type="FunFam" id="2.70.40.10:FF:000001">
    <property type="entry name" value="dCTP deaminase"/>
    <property type="match status" value="1"/>
</dbReference>
<dbReference type="Gene3D" id="2.70.40.10">
    <property type="match status" value="1"/>
</dbReference>
<dbReference type="HAMAP" id="MF_00146">
    <property type="entry name" value="dCTP_deaminase"/>
    <property type="match status" value="1"/>
</dbReference>
<dbReference type="InterPro" id="IPR011962">
    <property type="entry name" value="dCTP_deaminase"/>
</dbReference>
<dbReference type="InterPro" id="IPR036157">
    <property type="entry name" value="dUTPase-like_sf"/>
</dbReference>
<dbReference type="InterPro" id="IPR033704">
    <property type="entry name" value="dUTPase_trimeric"/>
</dbReference>
<dbReference type="NCBIfam" id="TIGR02274">
    <property type="entry name" value="dCTP_deam"/>
    <property type="match status" value="1"/>
</dbReference>
<dbReference type="PANTHER" id="PTHR42680">
    <property type="entry name" value="DCTP DEAMINASE"/>
    <property type="match status" value="1"/>
</dbReference>
<dbReference type="PANTHER" id="PTHR42680:SF3">
    <property type="entry name" value="DCTP DEAMINASE"/>
    <property type="match status" value="1"/>
</dbReference>
<dbReference type="Pfam" id="PF22769">
    <property type="entry name" value="DCD"/>
    <property type="match status" value="1"/>
</dbReference>
<dbReference type="SUPFAM" id="SSF51283">
    <property type="entry name" value="dUTPase-like"/>
    <property type="match status" value="1"/>
</dbReference>
<organism>
    <name type="scientific">Campylobacter curvus (strain 525.92)</name>
    <dbReference type="NCBI Taxonomy" id="360105"/>
    <lineage>
        <taxon>Bacteria</taxon>
        <taxon>Pseudomonadati</taxon>
        <taxon>Campylobacterota</taxon>
        <taxon>Epsilonproteobacteria</taxon>
        <taxon>Campylobacterales</taxon>
        <taxon>Campylobacteraceae</taxon>
        <taxon>Campylobacter</taxon>
    </lineage>
</organism>
<evidence type="ECO:0000255" key="1">
    <source>
        <dbReference type="HAMAP-Rule" id="MF_00146"/>
    </source>
</evidence>
<name>DCD_CAMC5</name>
<sequence length="186" mass="20520">MGLKSDAWIRKMSHEKAMIVPFAEEQVGRGVVSYGVSSYGYDIRVGDEFKIFTNIGGTVVDPKNFDEKNVVDFKGDVCIVPPNSFALARTIEYFNMPDNVLAICLGKSTYARCGIIVNVTPFEPGFKGHITIEISNTTPLPAKIYANEGIAQVLFIEGDEPCEVTYADKKGKYQAQEGITLPRILK</sequence>
<reference key="1">
    <citation type="submission" date="2007-07" db="EMBL/GenBank/DDBJ databases">
        <title>Genome sequence of Campylobacter curvus 525.92 isolated from human feces.</title>
        <authorList>
            <person name="Fouts D.E."/>
            <person name="Mongodin E.F."/>
            <person name="Puiu D."/>
            <person name="Sebastian Y."/>
            <person name="Miller W.G."/>
            <person name="Mandrell R.E."/>
            <person name="Lastovica A.J."/>
            <person name="Nelson K.E."/>
        </authorList>
    </citation>
    <scope>NUCLEOTIDE SEQUENCE [LARGE SCALE GENOMIC DNA]</scope>
    <source>
        <strain>525.92</strain>
    </source>
</reference>
<keyword id="KW-0378">Hydrolase</keyword>
<keyword id="KW-0546">Nucleotide metabolism</keyword>
<keyword id="KW-0547">Nucleotide-binding</keyword>
<keyword id="KW-1185">Reference proteome</keyword>
<protein>
    <recommendedName>
        <fullName evidence="1">dCTP deaminase</fullName>
        <ecNumber evidence="1">3.5.4.13</ecNumber>
    </recommendedName>
    <alternativeName>
        <fullName evidence="1">Deoxycytidine triphosphate deaminase</fullName>
    </alternativeName>
</protein>
<gene>
    <name evidence="1" type="primary">dcd</name>
    <name type="ordered locus">Ccur92_16580</name>
    <name type="ORF">CCV52592_0559</name>
</gene>